<reference key="1">
    <citation type="journal article" date="1998" name="DNA Res.">
        <title>Structural analysis of Arabidopsis thaliana chromosome 5. IV. Sequence features of the regions of 1,456,315 bp covered by nineteen physically assigned P1 and TAC clones.</title>
        <authorList>
            <person name="Sato S."/>
            <person name="Kaneko T."/>
            <person name="Kotani H."/>
            <person name="Nakamura Y."/>
            <person name="Asamizu E."/>
            <person name="Miyajima N."/>
            <person name="Tabata S."/>
        </authorList>
    </citation>
    <scope>NUCLEOTIDE SEQUENCE [LARGE SCALE GENOMIC DNA]</scope>
    <source>
        <strain>cv. Columbia</strain>
    </source>
</reference>
<reference key="2">
    <citation type="journal article" date="2017" name="Plant J.">
        <title>Araport11: a complete reannotation of the Arabidopsis thaliana reference genome.</title>
        <authorList>
            <person name="Cheng C.Y."/>
            <person name="Krishnakumar V."/>
            <person name="Chan A.P."/>
            <person name="Thibaud-Nissen F."/>
            <person name="Schobel S."/>
            <person name="Town C.D."/>
        </authorList>
    </citation>
    <scope>GENOME REANNOTATION</scope>
    <source>
        <strain>cv. Columbia</strain>
    </source>
</reference>
<reference key="3">
    <citation type="journal article" date="2003" name="Science">
        <title>Empirical analysis of transcriptional activity in the Arabidopsis genome.</title>
        <authorList>
            <person name="Yamada K."/>
            <person name="Lim J."/>
            <person name="Dale J.M."/>
            <person name="Chen H."/>
            <person name="Shinn P."/>
            <person name="Palm C.J."/>
            <person name="Southwick A.M."/>
            <person name="Wu H.C."/>
            <person name="Kim C.J."/>
            <person name="Nguyen M."/>
            <person name="Pham P.K."/>
            <person name="Cheuk R.F."/>
            <person name="Karlin-Newmann G."/>
            <person name="Liu S.X."/>
            <person name="Lam B."/>
            <person name="Sakano H."/>
            <person name="Wu T."/>
            <person name="Yu G."/>
            <person name="Miranda M."/>
            <person name="Quach H.L."/>
            <person name="Tripp M."/>
            <person name="Chang C.H."/>
            <person name="Lee J.M."/>
            <person name="Toriumi M.J."/>
            <person name="Chan M.M."/>
            <person name="Tang C.C."/>
            <person name="Onodera C.S."/>
            <person name="Deng J.M."/>
            <person name="Akiyama K."/>
            <person name="Ansari Y."/>
            <person name="Arakawa T."/>
            <person name="Banh J."/>
            <person name="Banno F."/>
            <person name="Bowser L."/>
            <person name="Brooks S.Y."/>
            <person name="Carninci P."/>
            <person name="Chao Q."/>
            <person name="Choy N."/>
            <person name="Enju A."/>
            <person name="Goldsmith A.D."/>
            <person name="Gurjal M."/>
            <person name="Hansen N.F."/>
            <person name="Hayashizaki Y."/>
            <person name="Johnson-Hopson C."/>
            <person name="Hsuan V.W."/>
            <person name="Iida K."/>
            <person name="Karnes M."/>
            <person name="Khan S."/>
            <person name="Koesema E."/>
            <person name="Ishida J."/>
            <person name="Jiang P.X."/>
            <person name="Jones T."/>
            <person name="Kawai J."/>
            <person name="Kamiya A."/>
            <person name="Meyers C."/>
            <person name="Nakajima M."/>
            <person name="Narusaka M."/>
            <person name="Seki M."/>
            <person name="Sakurai T."/>
            <person name="Satou M."/>
            <person name="Tamse R."/>
            <person name="Vaysberg M."/>
            <person name="Wallender E.K."/>
            <person name="Wong C."/>
            <person name="Yamamura Y."/>
            <person name="Yuan S."/>
            <person name="Shinozaki K."/>
            <person name="Davis R.W."/>
            <person name="Theologis A."/>
            <person name="Ecker J.R."/>
        </authorList>
    </citation>
    <scope>NUCLEOTIDE SEQUENCE [LARGE SCALE MRNA]</scope>
    <source>
        <strain>cv. Columbia</strain>
    </source>
</reference>
<reference key="4">
    <citation type="submission" date="2009-03" db="EMBL/GenBank/DDBJ databases">
        <title>ORF cloning and analysis of Arabidopsis transcription factor genes.</title>
        <authorList>
            <person name="Fujita M."/>
            <person name="Mizukado S."/>
            <person name="Seki M."/>
            <person name="Shinozaki K."/>
            <person name="Mitsuda N."/>
            <person name="Takiguchi Y."/>
            <person name="Takagi M."/>
        </authorList>
    </citation>
    <scope>NUCLEOTIDE SEQUENCE [LARGE SCALE MRNA]</scope>
</reference>
<reference key="5">
    <citation type="journal article" date="2002" name="Nucleic Acids Res.">
        <title>Analysis of histone acetyltransferase and histone deacetylase families of Arabidopsis thaliana suggests functional diversification of chromatin modification among multicellular eukaryotes.</title>
        <authorList>
            <person name="Pandey R."/>
            <person name="Mueller A."/>
            <person name="Napoli C.A."/>
            <person name="Selinger D.A."/>
            <person name="Pikaard C.S."/>
            <person name="Richards E.J."/>
            <person name="Bender J."/>
            <person name="Mount D.W."/>
            <person name="Jorgensen R.A."/>
        </authorList>
    </citation>
    <scope>IDENTIFICATION</scope>
    <scope>NOMENCLATURE</scope>
</reference>
<reference key="6">
    <citation type="journal article" date="2007" name="Plant J.">
        <title>In vitro specificities of Arabidopsis co-activator histone acetyltransferases: implications for histone hyperacetylation in gene activation.</title>
        <authorList>
            <person name="Earley K.W."/>
            <person name="Shook M.S."/>
            <person name="Brower-Toland B."/>
            <person name="Hicks L."/>
            <person name="Pikaard C.S."/>
        </authorList>
    </citation>
    <scope>FUNCTION</scope>
    <scope>SUBCELLULAR LOCATION</scope>
</reference>
<reference key="7">
    <citation type="journal article" date="2008" name="BMC Plant Biol.">
        <title>The MYST histone acetyltransferases are essential for gametophyte development in Arabidopsis.</title>
        <authorList>
            <person name="Latrasse D."/>
            <person name="Benhamed M."/>
            <person name="Henry Y."/>
            <person name="Domenichini S."/>
            <person name="Kim W."/>
            <person name="Zhou D.X."/>
            <person name="Delarue M."/>
        </authorList>
    </citation>
    <scope>FUNCTION</scope>
    <scope>DISRUPTION PHENOTYPE</scope>
    <scope>TISSUE SPECIFICITY</scope>
</reference>
<reference key="8">
    <citation type="journal article" date="2012" name="Plant Physiol.">
        <title>Participation of chromatin-remodeling proteins in the repair of ultraviolet-B-damaged DNA.</title>
        <authorList>
            <person name="Campi M."/>
            <person name="D'Andrea L."/>
            <person name="Emiliani J."/>
            <person name="Casati P."/>
        </authorList>
    </citation>
    <scope>FUNCTION</scope>
    <scope>INDUCTION BY UV</scope>
</reference>
<reference key="9">
    <citation type="journal article" date="2013" name="J. Plant Physiol.">
        <title>Requirement of histone acetyltransferases HAM1 and HAM2 for epigenetic modification of FLC in regulating flowering in Arabidopsis.</title>
        <authorList>
            <person name="Xiao J."/>
            <person name="Zhang H."/>
            <person name="Xing L."/>
            <person name="Xu S."/>
            <person name="Liu H."/>
            <person name="Chong K."/>
            <person name="Xu Y."/>
        </authorList>
    </citation>
    <scope>FUNCTION</scope>
    <scope>TISSUE SPECIFICITY</scope>
</reference>
<reference key="10">
    <citation type="journal article" date="2014" name="Nucleic Acids Res.">
        <title>Arabidopsis MRG domain proteins bridge two histone modifications to elevate expression of flowering genes.</title>
        <authorList>
            <person name="Xu Y."/>
            <person name="Gan E.S."/>
            <person name="Zhou J."/>
            <person name="Wee W.Y."/>
            <person name="Zhang X."/>
            <person name="Ito T."/>
        </authorList>
    </citation>
    <scope>INTERACTION WITH MRG1 AND MRG2</scope>
    <source>
        <strain>cv. Columbia</strain>
    </source>
</reference>
<reference key="11">
    <citation type="journal article" date="2015" name="BMC Plant Biol.">
        <title>AtEAF1 is a potential platform protein for Arabidopsis NuA4 acetyltransferase complex.</title>
        <authorList>
            <person name="Bieluszewski T."/>
            <person name="Galganski L."/>
            <person name="Sura W."/>
            <person name="Bieluszewska A."/>
            <person name="Abram M."/>
            <person name="Ludwikow A."/>
            <person name="Ziolkowski P."/>
            <person name="Sadowski J."/>
        </authorList>
    </citation>
    <scope>IDENTIFICATION IN THE NUA4 COMPLEX</scope>
</reference>
<name>MYST1_ARATH</name>
<proteinExistence type="evidence at protein level"/>
<accession>Q9FLF7</accession>
<accession>C0SVV9</accession>
<keyword id="KW-0007">Acetylation</keyword>
<keyword id="KW-0010">Activator</keyword>
<keyword id="KW-0012">Acyltransferase</keyword>
<keyword id="KW-0156">Chromatin regulator</keyword>
<keyword id="KW-0479">Metal-binding</keyword>
<keyword id="KW-0539">Nucleus</keyword>
<keyword id="KW-1185">Reference proteome</keyword>
<keyword id="KW-0804">Transcription</keyword>
<keyword id="KW-0805">Transcription regulation</keyword>
<keyword id="KW-0808">Transferase</keyword>
<keyword id="KW-0862">Zinc</keyword>
<keyword id="KW-0863">Zinc-finger</keyword>
<comment type="function">
    <text evidence="6 7 8 9">Histone acetyltransferase which may be involved in transcriptional activation. Acetylates 'Lys-5' of histone H4 (H4K5ac) (PubMed:17877703, PubMed:19040736, PubMed:22170978, PubMed:23273925). Essential for gametophyte development (PubMed:19040736). Involved in DNA repair after UV-B exposure (PubMed:22170978). Negative regulator of flowering controlling the H4K5ac levels in the FLC chromatin (PubMed:23273925).</text>
</comment>
<comment type="catalytic activity">
    <reaction evidence="2">
        <text>L-lysyl-[protein] + acetyl-CoA = N(6)-acetyl-L-lysyl-[protein] + CoA + H(+)</text>
        <dbReference type="Rhea" id="RHEA:45948"/>
        <dbReference type="Rhea" id="RHEA-COMP:9752"/>
        <dbReference type="Rhea" id="RHEA-COMP:10731"/>
        <dbReference type="ChEBI" id="CHEBI:15378"/>
        <dbReference type="ChEBI" id="CHEBI:29969"/>
        <dbReference type="ChEBI" id="CHEBI:57287"/>
        <dbReference type="ChEBI" id="CHEBI:57288"/>
        <dbReference type="ChEBI" id="CHEBI:61930"/>
        <dbReference type="EC" id="2.3.1.48"/>
    </reaction>
</comment>
<comment type="subunit">
    <text evidence="10 11">Interacts with MRG1 and MRG2 (PubMed:25183522). Component of the NuA4 histone acetyltransferase complex (Ref.11).</text>
</comment>
<comment type="subcellular location">
    <subcellularLocation>
        <location evidence="6">Nucleus</location>
    </subcellularLocation>
</comment>
<comment type="tissue specificity">
    <text evidence="7 9">Expressed in cotyledons, leaves, stems, roots and, at higher levels in developing flowers, particularly in the anthers and gynoecia (PubMed:19040736). Constitutively expressed in all tissues, predominantly in shoot apical meristem (PubMed:23273925).</text>
</comment>
<comment type="induction">
    <text evidence="8">Up-regulated upon UV-B exposure.</text>
</comment>
<comment type="PTM">
    <text evidence="1">Autoacetylation at Lys-269 is required for proper function.</text>
</comment>
<comment type="disruption phenotype">
    <text evidence="7">No visible phenotype, due to the redundancy with HAM2. Ham1 and ham2 double mutants are lethal.</text>
</comment>
<comment type="miscellaneous">
    <text evidence="9">Knockdown expression of both HAM1 and HAM2 results in earlier flowering.</text>
</comment>
<comment type="similarity">
    <text evidence="14">Belongs to the MYST (SAS/MOZ) family.</text>
</comment>
<organism>
    <name type="scientific">Arabidopsis thaliana</name>
    <name type="common">Mouse-ear cress</name>
    <dbReference type="NCBI Taxonomy" id="3702"/>
    <lineage>
        <taxon>Eukaryota</taxon>
        <taxon>Viridiplantae</taxon>
        <taxon>Streptophyta</taxon>
        <taxon>Embryophyta</taxon>
        <taxon>Tracheophyta</taxon>
        <taxon>Spermatophyta</taxon>
        <taxon>Magnoliopsida</taxon>
        <taxon>eudicotyledons</taxon>
        <taxon>Gunneridae</taxon>
        <taxon>Pentapetalae</taxon>
        <taxon>rosids</taxon>
        <taxon>malvids</taxon>
        <taxon>Brassicales</taxon>
        <taxon>Brassicaceae</taxon>
        <taxon>Camelineae</taxon>
        <taxon>Arabidopsis</taxon>
    </lineage>
</organism>
<gene>
    <name evidence="13" type="primary">HAM1</name>
    <name evidence="12" type="synonym">HAG4</name>
    <name evidence="15" type="ordered locus">At5g64610</name>
    <name evidence="16" type="ORF">MUB3.13</name>
</gene>
<sequence>MGSSADTETAMIIATPASNHNNPATNGGDANQNHTSGAILALTNSESDASKKRRMGVLPLEVGTRVMCQWRDGKYHPVKVIERRKNYNGGHNDYEYYVHYTEFNRRLDEWIKLEQLDLDSVECALDEKVEDKVTSLKMTRHQKRKIDETHVEGHEELDAASLREHEEFTKVKNIATIELGKYEIETWYFSPFPPEYNDCVKLFFCEFCLSFMKRKEQLQRHMRKCDLKHPPGDEIYRSSTLSMFEVDGKKNKVYAQNLCYLAKLFLDHKTLYYDVDLFLFYILCECDDRGCHMVGYFSKEKHSEEAYNLACILTLPPYQRKGYGKFLIAFSYELSKKEGKVGTPERPLSDLGLVSYRGYWTRILLDILKKHKGNISIKELSDMTAIKAEDILSTLQSLELIQYRKGQHVICADPKVLDRHLKAAGRGGLDVDVSKMIWTPYKEQS</sequence>
<dbReference type="EC" id="2.3.1.48" evidence="5"/>
<dbReference type="EMBL" id="AB010076">
    <property type="protein sequence ID" value="BAB11428.1"/>
    <property type="molecule type" value="Genomic_DNA"/>
</dbReference>
<dbReference type="EMBL" id="CP002688">
    <property type="protein sequence ID" value="AED97926.1"/>
    <property type="molecule type" value="Genomic_DNA"/>
</dbReference>
<dbReference type="EMBL" id="AY099684">
    <property type="protein sequence ID" value="AAM20535.1"/>
    <property type="molecule type" value="mRNA"/>
</dbReference>
<dbReference type="EMBL" id="BT000277">
    <property type="protein sequence ID" value="AAN15596.1"/>
    <property type="molecule type" value="mRNA"/>
</dbReference>
<dbReference type="EMBL" id="AB493812">
    <property type="protein sequence ID" value="BAH30650.1"/>
    <property type="molecule type" value="mRNA"/>
</dbReference>
<dbReference type="RefSeq" id="NP_201266.1">
    <property type="nucleotide sequence ID" value="NM_125857.3"/>
</dbReference>
<dbReference type="SMR" id="Q9FLF7"/>
<dbReference type="BioGRID" id="21824">
    <property type="interactions" value="10"/>
</dbReference>
<dbReference type="FunCoup" id="Q9FLF7">
    <property type="interactions" value="5023"/>
</dbReference>
<dbReference type="IntAct" id="Q9FLF7">
    <property type="interactions" value="8"/>
</dbReference>
<dbReference type="STRING" id="3702.Q9FLF7"/>
<dbReference type="PaxDb" id="3702-AT5G64610.1"/>
<dbReference type="ProteomicsDB" id="251379"/>
<dbReference type="EnsemblPlants" id="AT5G64610.1">
    <property type="protein sequence ID" value="AT5G64610.1"/>
    <property type="gene ID" value="AT5G64610"/>
</dbReference>
<dbReference type="GeneID" id="836582"/>
<dbReference type="Gramene" id="AT5G64610.1">
    <property type="protein sequence ID" value="AT5G64610.1"/>
    <property type="gene ID" value="AT5G64610"/>
</dbReference>
<dbReference type="KEGG" id="ath:AT5G64610"/>
<dbReference type="Araport" id="AT5G64610"/>
<dbReference type="TAIR" id="AT5G64610">
    <property type="gene designation" value="HAM1"/>
</dbReference>
<dbReference type="eggNOG" id="KOG2747">
    <property type="taxonomic scope" value="Eukaryota"/>
</dbReference>
<dbReference type="HOGENOM" id="CLU_011815_2_1_1"/>
<dbReference type="InParanoid" id="Q9FLF7"/>
<dbReference type="OMA" id="RIRNVEC"/>
<dbReference type="OrthoDB" id="787137at2759"/>
<dbReference type="PhylomeDB" id="Q9FLF7"/>
<dbReference type="BRENDA" id="2.3.1.48">
    <property type="organism ID" value="399"/>
</dbReference>
<dbReference type="PRO" id="PR:Q9FLF7"/>
<dbReference type="Proteomes" id="UP000006548">
    <property type="component" value="Chromosome 5"/>
</dbReference>
<dbReference type="ExpressionAtlas" id="Q9FLF7">
    <property type="expression patterns" value="baseline and differential"/>
</dbReference>
<dbReference type="GO" id="GO:0005634">
    <property type="term" value="C:nucleus"/>
    <property type="evidence" value="ECO:0000314"/>
    <property type="project" value="TAIR"/>
</dbReference>
<dbReference type="GO" id="GO:0004402">
    <property type="term" value="F:histone acetyltransferase activity"/>
    <property type="evidence" value="ECO:0000314"/>
    <property type="project" value="TAIR"/>
</dbReference>
<dbReference type="GO" id="GO:0043995">
    <property type="term" value="F:histone H4K5 acetyltransferase activity"/>
    <property type="evidence" value="ECO:0000315"/>
    <property type="project" value="CACAO"/>
</dbReference>
<dbReference type="GO" id="GO:0008270">
    <property type="term" value="F:zinc ion binding"/>
    <property type="evidence" value="ECO:0007669"/>
    <property type="project" value="UniProtKB-KW"/>
</dbReference>
<dbReference type="GO" id="GO:0006281">
    <property type="term" value="P:DNA repair"/>
    <property type="evidence" value="ECO:0000315"/>
    <property type="project" value="TAIR"/>
</dbReference>
<dbReference type="GO" id="GO:0006355">
    <property type="term" value="P:regulation of DNA-templated transcription"/>
    <property type="evidence" value="ECO:0007669"/>
    <property type="project" value="InterPro"/>
</dbReference>
<dbReference type="GO" id="GO:2000028">
    <property type="term" value="P:regulation of photoperiodism, flowering"/>
    <property type="evidence" value="ECO:0000315"/>
    <property type="project" value="CACAO"/>
</dbReference>
<dbReference type="GO" id="GO:0010224">
    <property type="term" value="P:response to UV-B"/>
    <property type="evidence" value="ECO:0000270"/>
    <property type="project" value="TAIR"/>
</dbReference>
<dbReference type="CDD" id="cd18642">
    <property type="entry name" value="CBD_MOF_like"/>
    <property type="match status" value="1"/>
</dbReference>
<dbReference type="CDD" id="cd04301">
    <property type="entry name" value="NAT_SF"/>
    <property type="match status" value="1"/>
</dbReference>
<dbReference type="FunFam" id="1.10.10.10:FF:000022">
    <property type="entry name" value="Histone acetyltransferase"/>
    <property type="match status" value="1"/>
</dbReference>
<dbReference type="FunFam" id="2.30.30.140:FF:000067">
    <property type="entry name" value="Histone acetyltransferase"/>
    <property type="match status" value="1"/>
</dbReference>
<dbReference type="FunFam" id="3.30.60.60:FF:000001">
    <property type="entry name" value="Histone acetyltransferase"/>
    <property type="match status" value="1"/>
</dbReference>
<dbReference type="FunFam" id="3.40.630.30:FF:000002">
    <property type="entry name" value="Histone acetyltransferase"/>
    <property type="match status" value="1"/>
</dbReference>
<dbReference type="Gene3D" id="2.30.30.140">
    <property type="match status" value="1"/>
</dbReference>
<dbReference type="Gene3D" id="3.40.630.30">
    <property type="match status" value="1"/>
</dbReference>
<dbReference type="Gene3D" id="3.30.60.60">
    <property type="entry name" value="N-acetyl transferase-like"/>
    <property type="match status" value="1"/>
</dbReference>
<dbReference type="Gene3D" id="1.10.10.10">
    <property type="entry name" value="Winged helix-like DNA-binding domain superfamily/Winged helix DNA-binding domain"/>
    <property type="match status" value="1"/>
</dbReference>
<dbReference type="InterPro" id="IPR016181">
    <property type="entry name" value="Acyl_CoA_acyltransferase"/>
</dbReference>
<dbReference type="InterPro" id="IPR016197">
    <property type="entry name" value="Chromo-like_dom_sf"/>
</dbReference>
<dbReference type="InterPro" id="IPR000953">
    <property type="entry name" value="Chromo/chromo_shadow_dom"/>
</dbReference>
<dbReference type="InterPro" id="IPR002717">
    <property type="entry name" value="HAT_MYST-type"/>
</dbReference>
<dbReference type="InterPro" id="IPR050603">
    <property type="entry name" value="MYST_HAT"/>
</dbReference>
<dbReference type="InterPro" id="IPR025995">
    <property type="entry name" value="Tudor-knot"/>
</dbReference>
<dbReference type="InterPro" id="IPR036388">
    <property type="entry name" value="WH-like_DNA-bd_sf"/>
</dbReference>
<dbReference type="InterPro" id="IPR040706">
    <property type="entry name" value="Zf-MYST"/>
</dbReference>
<dbReference type="PANTHER" id="PTHR10615">
    <property type="entry name" value="HISTONE ACETYLTRANSFERASE"/>
    <property type="match status" value="1"/>
</dbReference>
<dbReference type="PANTHER" id="PTHR10615:SF209">
    <property type="entry name" value="HISTONE ACETYLTRANSFERASE OF THE MYST FAMILY 1"/>
    <property type="match status" value="1"/>
</dbReference>
<dbReference type="Pfam" id="PF01853">
    <property type="entry name" value="MOZ_SAS"/>
    <property type="match status" value="1"/>
</dbReference>
<dbReference type="Pfam" id="PF11717">
    <property type="entry name" value="Tudor-knot"/>
    <property type="match status" value="1"/>
</dbReference>
<dbReference type="Pfam" id="PF17772">
    <property type="entry name" value="zf-MYST"/>
    <property type="match status" value="1"/>
</dbReference>
<dbReference type="SMART" id="SM00298">
    <property type="entry name" value="CHROMO"/>
    <property type="match status" value="1"/>
</dbReference>
<dbReference type="SUPFAM" id="SSF55729">
    <property type="entry name" value="Acyl-CoA N-acyltransferases (Nat)"/>
    <property type="match status" value="1"/>
</dbReference>
<dbReference type="SUPFAM" id="SSF54160">
    <property type="entry name" value="Chromo domain-like"/>
    <property type="match status" value="1"/>
</dbReference>
<dbReference type="PROSITE" id="PS51726">
    <property type="entry name" value="MYST_HAT"/>
    <property type="match status" value="1"/>
</dbReference>
<feature type="chain" id="PRO_0000238464" description="Histone acetyltransferase of the MYST family 1">
    <location>
        <begin position="1"/>
        <end position="445"/>
    </location>
</feature>
<feature type="domain" description="Tudor-knot" evidence="3">
    <location>
        <begin position="60"/>
        <end position="118"/>
    </location>
</feature>
<feature type="domain" description="MYST-type HAT" evidence="4">
    <location>
        <begin position="169"/>
        <end position="440"/>
    </location>
</feature>
<feature type="zinc finger region" description="C2HC MYST-type" evidence="4">
    <location>
        <begin position="202"/>
        <end position="227"/>
    </location>
</feature>
<feature type="active site" description="Proton donor/acceptor" evidence="1">
    <location>
        <position position="345"/>
    </location>
</feature>
<feature type="binding site" evidence="1">
    <location>
        <begin position="312"/>
        <end position="314"/>
    </location>
    <ligand>
        <name>acetyl-CoA</name>
        <dbReference type="ChEBI" id="CHEBI:57288"/>
    </ligand>
</feature>
<feature type="binding site" evidence="1">
    <location>
        <begin position="319"/>
        <end position="325"/>
    </location>
    <ligand>
        <name>acetyl-CoA</name>
        <dbReference type="ChEBI" id="CHEBI:57288"/>
    </ligand>
</feature>
<feature type="binding site" evidence="1">
    <location>
        <position position="349"/>
    </location>
    <ligand>
        <name>acetyl-CoA</name>
        <dbReference type="ChEBI" id="CHEBI:57288"/>
    </ligand>
</feature>
<feature type="modified residue" description="N6-acetyllysine; by autocatalysis" evidence="1">
    <location>
        <position position="269"/>
    </location>
</feature>
<evidence type="ECO:0000250" key="1">
    <source>
        <dbReference type="UniProtKB" id="Q9H7Z6"/>
    </source>
</evidence>
<evidence type="ECO:0000250" key="2">
    <source>
        <dbReference type="UniProtKB" id="Q9LXD7"/>
    </source>
</evidence>
<evidence type="ECO:0000255" key="3"/>
<evidence type="ECO:0000255" key="4">
    <source>
        <dbReference type="PROSITE-ProRule" id="PRU01063"/>
    </source>
</evidence>
<evidence type="ECO:0000255" key="5">
    <source>
        <dbReference type="RuleBase" id="RU361211"/>
    </source>
</evidence>
<evidence type="ECO:0000269" key="6">
    <source>
    </source>
</evidence>
<evidence type="ECO:0000269" key="7">
    <source>
    </source>
</evidence>
<evidence type="ECO:0000269" key="8">
    <source>
    </source>
</evidence>
<evidence type="ECO:0000269" key="9">
    <source>
    </source>
</evidence>
<evidence type="ECO:0000269" key="10">
    <source>
    </source>
</evidence>
<evidence type="ECO:0000269" key="11">
    <source ref="11"/>
</evidence>
<evidence type="ECO:0000303" key="12">
    <source>
    </source>
</evidence>
<evidence type="ECO:0000303" key="13">
    <source>
    </source>
</evidence>
<evidence type="ECO:0000305" key="14"/>
<evidence type="ECO:0000312" key="15">
    <source>
        <dbReference type="Araport" id="AT5G64610"/>
    </source>
</evidence>
<evidence type="ECO:0000312" key="16">
    <source>
        <dbReference type="EMBL" id="BAB11428.1"/>
    </source>
</evidence>
<protein>
    <recommendedName>
        <fullName evidence="13">Histone acetyltransferase of the MYST family 1</fullName>
        <ecNumber evidence="5">2.3.1.48</ecNumber>
    </recommendedName>
    <alternativeName>
        <fullName evidence="12">Histone acetyltransferase of the GNAT/MYST superfamily 4</fullName>
    </alternativeName>
    <alternativeName>
        <fullName evidence="13">MYST-like histone acetyltransferase 1</fullName>
    </alternativeName>
</protein>